<dbReference type="EC" id="2.1.2.3" evidence="1"/>
<dbReference type="EC" id="3.5.4.10" evidence="1"/>
<dbReference type="EMBL" id="CP000551">
    <property type="protein sequence ID" value="ABM69576.1"/>
    <property type="molecule type" value="Genomic_DNA"/>
</dbReference>
<dbReference type="RefSeq" id="WP_011817758.1">
    <property type="nucleotide sequence ID" value="NC_008816.1"/>
</dbReference>
<dbReference type="SMR" id="A2BP65"/>
<dbReference type="STRING" id="146891.A9601_02881"/>
<dbReference type="KEGG" id="pmb:A9601_02881"/>
<dbReference type="eggNOG" id="COG0138">
    <property type="taxonomic scope" value="Bacteria"/>
</dbReference>
<dbReference type="HOGENOM" id="CLU_016316_5_2_3"/>
<dbReference type="OrthoDB" id="9802065at2"/>
<dbReference type="UniPathway" id="UPA00074">
    <property type="reaction ID" value="UER00133"/>
</dbReference>
<dbReference type="UniPathway" id="UPA00074">
    <property type="reaction ID" value="UER00135"/>
</dbReference>
<dbReference type="Proteomes" id="UP000002590">
    <property type="component" value="Chromosome"/>
</dbReference>
<dbReference type="GO" id="GO:0005829">
    <property type="term" value="C:cytosol"/>
    <property type="evidence" value="ECO:0007669"/>
    <property type="project" value="TreeGrafter"/>
</dbReference>
<dbReference type="GO" id="GO:0003937">
    <property type="term" value="F:IMP cyclohydrolase activity"/>
    <property type="evidence" value="ECO:0007669"/>
    <property type="project" value="UniProtKB-UniRule"/>
</dbReference>
<dbReference type="GO" id="GO:0004643">
    <property type="term" value="F:phosphoribosylaminoimidazolecarboxamide formyltransferase activity"/>
    <property type="evidence" value="ECO:0007669"/>
    <property type="project" value="UniProtKB-UniRule"/>
</dbReference>
<dbReference type="GO" id="GO:0006189">
    <property type="term" value="P:'de novo' IMP biosynthetic process"/>
    <property type="evidence" value="ECO:0007669"/>
    <property type="project" value="UniProtKB-UniRule"/>
</dbReference>
<dbReference type="CDD" id="cd01421">
    <property type="entry name" value="IMPCH"/>
    <property type="match status" value="1"/>
</dbReference>
<dbReference type="FunFam" id="3.40.140.20:FF:000001">
    <property type="entry name" value="Bifunctional purine biosynthesis protein PurH"/>
    <property type="match status" value="1"/>
</dbReference>
<dbReference type="FunFam" id="3.40.50.1380:FF:000001">
    <property type="entry name" value="Bifunctional purine biosynthesis protein PurH"/>
    <property type="match status" value="1"/>
</dbReference>
<dbReference type="Gene3D" id="3.40.140.20">
    <property type="match status" value="2"/>
</dbReference>
<dbReference type="Gene3D" id="3.40.50.1380">
    <property type="entry name" value="Methylglyoxal synthase-like domain"/>
    <property type="match status" value="1"/>
</dbReference>
<dbReference type="HAMAP" id="MF_00139">
    <property type="entry name" value="PurH"/>
    <property type="match status" value="1"/>
</dbReference>
<dbReference type="InterPro" id="IPR024051">
    <property type="entry name" value="AICAR_Tfase_dup_dom_sf"/>
</dbReference>
<dbReference type="InterPro" id="IPR016193">
    <property type="entry name" value="Cytidine_deaminase-like"/>
</dbReference>
<dbReference type="InterPro" id="IPR011607">
    <property type="entry name" value="MGS-like_dom"/>
</dbReference>
<dbReference type="InterPro" id="IPR036914">
    <property type="entry name" value="MGS-like_dom_sf"/>
</dbReference>
<dbReference type="InterPro" id="IPR002695">
    <property type="entry name" value="PurH-like"/>
</dbReference>
<dbReference type="NCBIfam" id="NF002049">
    <property type="entry name" value="PRK00881.1"/>
    <property type="match status" value="1"/>
</dbReference>
<dbReference type="NCBIfam" id="TIGR00355">
    <property type="entry name" value="purH"/>
    <property type="match status" value="1"/>
</dbReference>
<dbReference type="PANTHER" id="PTHR11692:SF0">
    <property type="entry name" value="BIFUNCTIONAL PURINE BIOSYNTHESIS PROTEIN ATIC"/>
    <property type="match status" value="1"/>
</dbReference>
<dbReference type="PANTHER" id="PTHR11692">
    <property type="entry name" value="BIFUNCTIONAL PURINE BIOSYNTHESIS PROTEIN PURH"/>
    <property type="match status" value="1"/>
</dbReference>
<dbReference type="Pfam" id="PF01808">
    <property type="entry name" value="AICARFT_IMPCHas"/>
    <property type="match status" value="1"/>
</dbReference>
<dbReference type="Pfam" id="PF02142">
    <property type="entry name" value="MGS"/>
    <property type="match status" value="1"/>
</dbReference>
<dbReference type="PIRSF" id="PIRSF000414">
    <property type="entry name" value="AICARFT_IMPCHas"/>
    <property type="match status" value="1"/>
</dbReference>
<dbReference type="SMART" id="SM00798">
    <property type="entry name" value="AICARFT_IMPCHas"/>
    <property type="match status" value="1"/>
</dbReference>
<dbReference type="SMART" id="SM00851">
    <property type="entry name" value="MGS"/>
    <property type="match status" value="1"/>
</dbReference>
<dbReference type="SUPFAM" id="SSF53927">
    <property type="entry name" value="Cytidine deaminase-like"/>
    <property type="match status" value="1"/>
</dbReference>
<dbReference type="SUPFAM" id="SSF52335">
    <property type="entry name" value="Methylglyoxal synthase-like"/>
    <property type="match status" value="1"/>
</dbReference>
<dbReference type="PROSITE" id="PS51855">
    <property type="entry name" value="MGS"/>
    <property type="match status" value="1"/>
</dbReference>
<name>PUR9_PROMS</name>
<sequence>MSPLALVSVSDKKNIIPFCKELVEHFNYKILSSGGTAKHLIEAKIPVIKVADFTNSPEILGGRVKTLHPKIHGGILAIRTDEEHKKDIEANNLELIDLVVVNLYPFKKTVDGGAKWEDAIENIDIGGPSMIRSAAKNHKDVSVLVDSSQYQSFLEESKKGELKDSYKAKLALEAFQHTADYDTAISNWIRKERDLQSSKYIESYPLIKTLRYGENPHQKAFWYGLSNIGWNSAEQLQGKDLSYNNLLDLESALSTVLEFGYTEKDELATDMVASVILKHNNPCGASMSNSASKAFLNALECDSVSAFGGIVAFNSNVDSETAIHLKDIFLECVVAPSFDEEALEILKVKKNLRILKISKDQLPQKNQNSTKSIMGGLLVQDTDDSEEKTENWISVTNKNPSNQINLDLNFAWKICKHVKSNAIVIAKDQKTIGIGAGQMNRVGAAKIALKAAGRLCSDAVLASDGFFPFADTVEIANEYGIKAIIQPGGSLRDQESIDMCNSKGISMVFTQKRHFLH</sequence>
<organism>
    <name type="scientific">Prochlorococcus marinus (strain AS9601)</name>
    <dbReference type="NCBI Taxonomy" id="146891"/>
    <lineage>
        <taxon>Bacteria</taxon>
        <taxon>Bacillati</taxon>
        <taxon>Cyanobacteriota</taxon>
        <taxon>Cyanophyceae</taxon>
        <taxon>Synechococcales</taxon>
        <taxon>Prochlorococcaceae</taxon>
        <taxon>Prochlorococcus</taxon>
    </lineage>
</organism>
<protein>
    <recommendedName>
        <fullName evidence="1">Bifunctional purine biosynthesis protein PurH</fullName>
    </recommendedName>
    <domain>
        <recommendedName>
            <fullName evidence="1">Phosphoribosylaminoimidazolecarboxamide formyltransferase</fullName>
            <ecNumber evidence="1">2.1.2.3</ecNumber>
        </recommendedName>
        <alternativeName>
            <fullName evidence="1">AICAR transformylase</fullName>
        </alternativeName>
    </domain>
    <domain>
        <recommendedName>
            <fullName evidence="1">IMP cyclohydrolase</fullName>
            <ecNumber evidence="1">3.5.4.10</ecNumber>
        </recommendedName>
        <alternativeName>
            <fullName evidence="1">ATIC</fullName>
        </alternativeName>
        <alternativeName>
            <fullName evidence="1">IMP synthase</fullName>
        </alternativeName>
        <alternativeName>
            <fullName evidence="1">Inosinicase</fullName>
        </alternativeName>
    </domain>
</protein>
<comment type="catalytic activity">
    <reaction evidence="1">
        <text>(6R)-10-formyltetrahydrofolate + 5-amino-1-(5-phospho-beta-D-ribosyl)imidazole-4-carboxamide = 5-formamido-1-(5-phospho-D-ribosyl)imidazole-4-carboxamide + (6S)-5,6,7,8-tetrahydrofolate</text>
        <dbReference type="Rhea" id="RHEA:22192"/>
        <dbReference type="ChEBI" id="CHEBI:57453"/>
        <dbReference type="ChEBI" id="CHEBI:58467"/>
        <dbReference type="ChEBI" id="CHEBI:58475"/>
        <dbReference type="ChEBI" id="CHEBI:195366"/>
        <dbReference type="EC" id="2.1.2.3"/>
    </reaction>
</comment>
<comment type="catalytic activity">
    <reaction evidence="1">
        <text>IMP + H2O = 5-formamido-1-(5-phospho-D-ribosyl)imidazole-4-carboxamide</text>
        <dbReference type="Rhea" id="RHEA:18445"/>
        <dbReference type="ChEBI" id="CHEBI:15377"/>
        <dbReference type="ChEBI" id="CHEBI:58053"/>
        <dbReference type="ChEBI" id="CHEBI:58467"/>
        <dbReference type="EC" id="3.5.4.10"/>
    </reaction>
</comment>
<comment type="pathway">
    <text evidence="1">Purine metabolism; IMP biosynthesis via de novo pathway; 5-formamido-1-(5-phospho-D-ribosyl)imidazole-4-carboxamide from 5-amino-1-(5-phospho-D-ribosyl)imidazole-4-carboxamide (10-formyl THF route): step 1/1.</text>
</comment>
<comment type="pathway">
    <text evidence="1">Purine metabolism; IMP biosynthesis via de novo pathway; IMP from 5-formamido-1-(5-phospho-D-ribosyl)imidazole-4-carboxamide: step 1/1.</text>
</comment>
<comment type="domain">
    <text evidence="1">The IMP cyclohydrolase activity resides in the N-terminal region.</text>
</comment>
<comment type="similarity">
    <text evidence="1">Belongs to the PurH family.</text>
</comment>
<gene>
    <name evidence="1" type="primary">purH</name>
    <name type="ordered locus">A9601_02881</name>
</gene>
<feature type="chain" id="PRO_1000018933" description="Bifunctional purine biosynthesis protein PurH">
    <location>
        <begin position="1"/>
        <end position="517"/>
    </location>
</feature>
<feature type="domain" description="MGS-like" evidence="2">
    <location>
        <begin position="1"/>
        <end position="145"/>
    </location>
</feature>
<evidence type="ECO:0000255" key="1">
    <source>
        <dbReference type="HAMAP-Rule" id="MF_00139"/>
    </source>
</evidence>
<evidence type="ECO:0000255" key="2">
    <source>
        <dbReference type="PROSITE-ProRule" id="PRU01202"/>
    </source>
</evidence>
<keyword id="KW-0378">Hydrolase</keyword>
<keyword id="KW-0511">Multifunctional enzyme</keyword>
<keyword id="KW-0658">Purine biosynthesis</keyword>
<keyword id="KW-0808">Transferase</keyword>
<accession>A2BP65</accession>
<reference key="1">
    <citation type="journal article" date="2007" name="PLoS Genet.">
        <title>Patterns and implications of gene gain and loss in the evolution of Prochlorococcus.</title>
        <authorList>
            <person name="Kettler G.C."/>
            <person name="Martiny A.C."/>
            <person name="Huang K."/>
            <person name="Zucker J."/>
            <person name="Coleman M.L."/>
            <person name="Rodrigue S."/>
            <person name="Chen F."/>
            <person name="Lapidus A."/>
            <person name="Ferriera S."/>
            <person name="Johnson J."/>
            <person name="Steglich C."/>
            <person name="Church G.M."/>
            <person name="Richardson P."/>
            <person name="Chisholm S.W."/>
        </authorList>
    </citation>
    <scope>NUCLEOTIDE SEQUENCE [LARGE SCALE GENOMIC DNA]</scope>
    <source>
        <strain>AS9601</strain>
    </source>
</reference>
<proteinExistence type="inferred from homology"/>